<sequence length="368" mass="43813">MELQANLENVLQKVNNFINIDAKRQIYAAHFDNLKNTIFNELRKNEVLAYLFNGFQLGGSYGDNVKVTVPNEYDLVFNIKFPEQPLIIVTADHELPGNVFLDFTRVIHKIAKEKQHEKILQHLKQWLDDENYLKVEKFQWFLRSCFIDVLTKMNFKITFKGRTSSLRYSREGPAHTIKVTESLNFDYSVDFVPGILLNANQCVTSNIVGQWEAIPKPTPTNNHLYKSFRASFYRQEQKIIKNQQQLKNVYRMMKKFRDSKTNMLKMKSYFIKTLFLWKSSRENVSYWSKPLTEIIIDMFKDMEKSLREEKLPFYWDRKLNLYDNYQPRLMREMLNCVESARETLEKAAKELTLPLQKRVFCIFCKLKI</sequence>
<reference key="1">
    <citation type="journal article" date="2015" name="Nat. Commun.">
        <title>Lucilia cuprina genome unlocks parasitic fly biology to underpin future interventions.</title>
        <authorList>
            <person name="Anstead C.A."/>
            <person name="Korhonen P.K."/>
            <person name="Young N.D."/>
            <person name="Hall R.S."/>
            <person name="Jex A.R."/>
            <person name="Murali S.C."/>
            <person name="Hughes D.S."/>
            <person name="Lee S.F."/>
            <person name="Perry T."/>
            <person name="Stroehlein A.J."/>
            <person name="Ansell B.R."/>
            <person name="Breugelmans B."/>
            <person name="Hofmann A."/>
            <person name="Qu J."/>
            <person name="Dugan S."/>
            <person name="Lee S.L."/>
            <person name="Chao H."/>
            <person name="Dinh H."/>
            <person name="Han Y."/>
            <person name="Doddapaneni H.V."/>
            <person name="Worley K.C."/>
            <person name="Muzny D.M."/>
            <person name="Ioannidis P."/>
            <person name="Waterhouse R.M."/>
            <person name="Zdobnov E.M."/>
            <person name="James P.J."/>
            <person name="Bagnall N.H."/>
            <person name="Kotze A.C."/>
            <person name="Gibbs R.A."/>
            <person name="Richards S."/>
            <person name="Batterham P."/>
            <person name="Gasser R.B."/>
        </authorList>
    </citation>
    <scope>NUCLEOTIDE SEQUENCE [LARGE SCALE GENOMIC DNA]</scope>
</reference>
<reference key="2">
    <citation type="journal article" date="2021" name="Nature">
        <title>cGAS-like receptors sense RNA and control 3'2'-cGAMP signaling in Drosophila.</title>
        <authorList>
            <person name="Slavik K.M."/>
            <person name="Morehouse B.R."/>
            <person name="Ragucci A.E."/>
            <person name="Zhou W."/>
            <person name="Ai X."/>
            <person name="Chen Y."/>
            <person name="Li L."/>
            <person name="Wei Z."/>
            <person name="Baehre H."/>
            <person name="Koenig M."/>
            <person name="Seifert R."/>
            <person name="Lee A.S.Y."/>
            <person name="Cai H."/>
            <person name="Imler J.L."/>
            <person name="Kranzusch P.J."/>
        </authorList>
    </citation>
    <scope>FUNCTION</scope>
    <scope>ACTIVITY REGULATION</scope>
</reference>
<dbReference type="EC" id="2.7.7.-" evidence="3"/>
<dbReference type="SMR" id="P0DV12"/>
<dbReference type="OrthoDB" id="7249367at2759"/>
<dbReference type="GO" id="GO:0140700">
    <property type="term" value="F:3',2'-cyclic GMP-AMP synthase activity"/>
    <property type="evidence" value="ECO:0000250"/>
    <property type="project" value="UniProtKB"/>
</dbReference>
<dbReference type="GO" id="GO:0005524">
    <property type="term" value="F:ATP binding"/>
    <property type="evidence" value="ECO:0007669"/>
    <property type="project" value="UniProtKB-KW"/>
</dbReference>
<dbReference type="GO" id="GO:0003725">
    <property type="term" value="F:double-stranded RNA binding"/>
    <property type="evidence" value="ECO:0000314"/>
    <property type="project" value="UniProtKB"/>
</dbReference>
<dbReference type="GO" id="GO:0005525">
    <property type="term" value="F:GTP binding"/>
    <property type="evidence" value="ECO:0007669"/>
    <property type="project" value="UniProtKB-KW"/>
</dbReference>
<dbReference type="GO" id="GO:0046872">
    <property type="term" value="F:metal ion binding"/>
    <property type="evidence" value="ECO:0007669"/>
    <property type="project" value="UniProtKB-KW"/>
</dbReference>
<dbReference type="GO" id="GO:0051607">
    <property type="term" value="P:defense response to virus"/>
    <property type="evidence" value="ECO:0000250"/>
    <property type="project" value="UniProtKB"/>
</dbReference>
<dbReference type="GO" id="GO:1902615">
    <property type="term" value="P:immune response involved in response to exogenous dsRNA"/>
    <property type="evidence" value="ECO:0000314"/>
    <property type="project" value="UniProtKB"/>
</dbReference>
<dbReference type="GO" id="GO:0045087">
    <property type="term" value="P:innate immune response"/>
    <property type="evidence" value="ECO:0007669"/>
    <property type="project" value="UniProtKB-KW"/>
</dbReference>
<dbReference type="Gene3D" id="1.10.1410.40">
    <property type="match status" value="1"/>
</dbReference>
<dbReference type="Gene3D" id="3.30.460.90">
    <property type="match status" value="1"/>
</dbReference>
<dbReference type="InterPro" id="IPR046903">
    <property type="entry name" value="Mab-21-like_nuc_Trfase"/>
</dbReference>
<dbReference type="InterPro" id="IPR046906">
    <property type="entry name" value="Mab-21_HhH/H2TH-like"/>
</dbReference>
<dbReference type="InterPro" id="IPR024810">
    <property type="entry name" value="MAB21L/cGLR"/>
</dbReference>
<dbReference type="PANTHER" id="PTHR10656">
    <property type="entry name" value="CELL FATE DETERMINING PROTEIN MAB21-RELATED"/>
    <property type="match status" value="1"/>
</dbReference>
<dbReference type="PANTHER" id="PTHR10656:SF42">
    <property type="entry name" value="CYCLIC GMP-AMP SYNTHASE-LIKE PROTEIN-RELATED"/>
    <property type="match status" value="1"/>
</dbReference>
<dbReference type="Pfam" id="PF03281">
    <property type="entry name" value="Mab-21"/>
    <property type="match status" value="1"/>
</dbReference>
<dbReference type="Pfam" id="PF20266">
    <property type="entry name" value="Mab-21_C"/>
    <property type="match status" value="1"/>
</dbReference>
<dbReference type="SMART" id="SM01265">
    <property type="entry name" value="Mab-21"/>
    <property type="match status" value="1"/>
</dbReference>
<accession>P0DV12</accession>
<proteinExistence type="inferred from homology"/>
<protein>
    <recommendedName>
        <fullName evidence="5">Cyclic GMP-AMP synthase-like receptor</fullName>
        <shortName evidence="4">cGLR</shortName>
        <ecNumber evidence="3">2.7.7.-</ecNumber>
    </recommendedName>
</protein>
<keyword id="KW-0051">Antiviral defense</keyword>
<keyword id="KW-0067">ATP-binding</keyword>
<keyword id="KW-0342">GTP-binding</keyword>
<keyword id="KW-0391">Immunity</keyword>
<keyword id="KW-0399">Innate immunity</keyword>
<keyword id="KW-0460">Magnesium</keyword>
<keyword id="KW-0464">Manganese</keyword>
<keyword id="KW-0479">Metal-binding</keyword>
<keyword id="KW-0547">Nucleotide-binding</keyword>
<keyword id="KW-0548">Nucleotidyltransferase</keyword>
<keyword id="KW-0694">RNA-binding</keyword>
<keyword id="KW-0808">Transferase</keyword>
<feature type="chain" id="PRO_0000454447" description="Cyclic GMP-AMP synthase-like receptor">
    <location>
        <begin position="1"/>
        <end position="368"/>
    </location>
</feature>
<feature type="binding site" evidence="2">
    <location>
        <position position="60"/>
    </location>
    <ligand>
        <name>ATP</name>
        <dbReference type="ChEBI" id="CHEBI:30616"/>
    </ligand>
</feature>
<feature type="binding site" evidence="2">
    <location>
        <begin position="72"/>
        <end position="74"/>
    </location>
    <ligand>
        <name>ATP</name>
        <dbReference type="ChEBI" id="CHEBI:30616"/>
    </ligand>
</feature>
<feature type="binding site" evidence="2">
    <location>
        <position position="72"/>
    </location>
    <ligand>
        <name>Mg(2+)</name>
        <dbReference type="ChEBI" id="CHEBI:18420"/>
        <note>catalytic</note>
    </ligand>
</feature>
<feature type="binding site" evidence="2">
    <location>
        <position position="74"/>
    </location>
    <ligand>
        <name>Mg(2+)</name>
        <dbReference type="ChEBI" id="CHEBI:18420"/>
        <note>catalytic</note>
    </ligand>
</feature>
<feature type="binding site" evidence="2">
    <location>
        <position position="190"/>
    </location>
    <ligand>
        <name>GTP</name>
        <dbReference type="ChEBI" id="CHEBI:37565"/>
    </ligand>
</feature>
<feature type="binding site" evidence="2">
    <location>
        <position position="190"/>
    </location>
    <ligand>
        <name>Mg(2+)</name>
        <dbReference type="ChEBI" id="CHEBI:18420"/>
        <note>catalytic</note>
    </ligand>
</feature>
<feature type="binding site" evidence="2">
    <location>
        <begin position="229"/>
        <end position="236"/>
    </location>
    <ligand>
        <name>GTP</name>
        <dbReference type="ChEBI" id="CHEBI:37565"/>
    </ligand>
</feature>
<feature type="binding site" evidence="2">
    <location>
        <begin position="233"/>
        <end position="236"/>
    </location>
    <ligand>
        <name>ATP</name>
        <dbReference type="ChEBI" id="CHEBI:30616"/>
    </ligand>
</feature>
<feature type="binding site" evidence="2">
    <location>
        <position position="254"/>
    </location>
    <ligand>
        <name>ATP</name>
        <dbReference type="ChEBI" id="CHEBI:30616"/>
    </ligand>
</feature>
<feature type="binding site" evidence="2">
    <location>
        <begin position="268"/>
        <end position="272"/>
    </location>
    <ligand>
        <name>ATP</name>
        <dbReference type="ChEBI" id="CHEBI:30616"/>
    </ligand>
</feature>
<organism>
    <name type="scientific">Lucilia cuprina</name>
    <name type="common">Green bottle fly</name>
    <name type="synonym">Australian sheep blowfly</name>
    <dbReference type="NCBI Taxonomy" id="7375"/>
    <lineage>
        <taxon>Eukaryota</taxon>
        <taxon>Metazoa</taxon>
        <taxon>Ecdysozoa</taxon>
        <taxon>Arthropoda</taxon>
        <taxon>Hexapoda</taxon>
        <taxon>Insecta</taxon>
        <taxon>Pterygota</taxon>
        <taxon>Neoptera</taxon>
        <taxon>Endopterygota</taxon>
        <taxon>Diptera</taxon>
        <taxon>Brachycera</taxon>
        <taxon>Muscomorpha</taxon>
        <taxon>Oestroidea</taxon>
        <taxon>Calliphoridae</taxon>
        <taxon>Luciliinae</taxon>
        <taxon>Lucilia</taxon>
    </lineage>
</organism>
<evidence type="ECO:0000250" key="1">
    <source>
        <dbReference type="UniProtKB" id="A1ZA55"/>
    </source>
</evidence>
<evidence type="ECO:0000250" key="2">
    <source>
        <dbReference type="UniProtKB" id="Q8N884"/>
    </source>
</evidence>
<evidence type="ECO:0000269" key="3">
    <source>
    </source>
</evidence>
<evidence type="ECO:0000303" key="4">
    <source>
    </source>
</evidence>
<evidence type="ECO:0000305" key="5"/>
<name>CGLR_LUCCU</name>
<comment type="function">
    <text evidence="1 3">Nucleotidyltransferase that catalyzes the formation of cyclic GMP-AMP (3',2'-cGAMP) from ATP and GTP and plays a key role in innate immunity (PubMed:34261127). Synthesizes 3',2'-cGAMP in a two-step reaction through production of the linear intermediate pppA(2'-5')pG (By similarity). Acts as a key sensor of double-stranded RNA (dsRNA), the presence of dsRNA in the cytoplasm being a danger signal that triggers the immune responses (PubMed:34261127). Directly binds dsRNA, activating the nucleotidyltransferase activity, leading to synthesis of 3',2'-cGAMP, a second messenger that binds to and activates Sting, thereby triggering the antiviral immune response via activation of the NF-kappa-B transcription factor Rel (Relish) (By similarity).</text>
</comment>
<comment type="catalytic activity">
    <reaction evidence="1">
        <text>GTP + ATP = 3',2'-cGAMP + 2 diphosphate</text>
        <dbReference type="Rhea" id="RHEA:68344"/>
        <dbReference type="ChEBI" id="CHEBI:30616"/>
        <dbReference type="ChEBI" id="CHEBI:33019"/>
        <dbReference type="ChEBI" id="CHEBI:37565"/>
        <dbReference type="ChEBI" id="CHEBI:177334"/>
    </reaction>
    <physiologicalReaction direction="left-to-right" evidence="1">
        <dbReference type="Rhea" id="RHEA:68345"/>
    </physiologicalReaction>
</comment>
<comment type="catalytic activity">
    <reaction evidence="1">
        <text>GTP + ATP = pppA(2'-5')pG + diphosphate</text>
        <dbReference type="Rhea" id="RHEA:68348"/>
        <dbReference type="ChEBI" id="CHEBI:30616"/>
        <dbReference type="ChEBI" id="CHEBI:33019"/>
        <dbReference type="ChEBI" id="CHEBI:37565"/>
        <dbReference type="ChEBI" id="CHEBI:177335"/>
    </reaction>
    <physiologicalReaction direction="left-to-right" evidence="1">
        <dbReference type="Rhea" id="RHEA:68349"/>
    </physiologicalReaction>
</comment>
<comment type="catalytic activity">
    <reaction evidence="1">
        <text>pppA(2'-5')pG = 3',2'-cGAMP + diphosphate</text>
        <dbReference type="Rhea" id="RHEA:68352"/>
        <dbReference type="ChEBI" id="CHEBI:33019"/>
        <dbReference type="ChEBI" id="CHEBI:177334"/>
        <dbReference type="ChEBI" id="CHEBI:177335"/>
    </reaction>
    <physiologicalReaction direction="left-to-right" evidence="1">
        <dbReference type="Rhea" id="RHEA:68353"/>
    </physiologicalReaction>
</comment>
<comment type="cofactor">
    <cofactor evidence="1">
        <name>Mg(2+)</name>
        <dbReference type="ChEBI" id="CHEBI:18420"/>
    </cofactor>
    <cofactor evidence="1">
        <name>Mn(2+)</name>
        <dbReference type="ChEBI" id="CHEBI:29035"/>
    </cofactor>
</comment>
<comment type="activity regulation">
    <text evidence="3">The enzyme activity is specifically activated by double-stranded RNA (dsRNA).</text>
</comment>
<comment type="similarity">
    <text evidence="5">Belongs to the mab-21 family.</text>
</comment>